<comment type="function">
    <text evidence="1 6">Component of the transcription coactivator SAGA complex. SAGA acts as a general cofactor required for essentially all RNA polymerase II transcription. At the promoters, SAGA is required for transcription pre-initiation complex (PIC) recruitment. It influences RNA polymerase II transcriptional activity through different activities such as TBP interaction (via core/TAF module) and promoter selectivity, interaction with transcription activators (via Tra1/SPT module), and chromatin modification through histone acetylation (via HAT module) and deubiquitination (via DUB module). SAGA preferentially acetylates histones H3 (to form H3K9ac, H3K14ac, H3K18ac and H3K23ac) and H2B and deubiquitinates histone H2B. SAGA interacts with DNA via upstream activating sequences (UASs). Sgf73 tethers the DUB module to the rest of the SAGA complex through its central domain and activates the ubiquitin hydrolase ubp8 by maintaining its catalytic domain in an active conformation. Sgf73 mediates recruitment of the TREX-2 mRNA export factors sac3 and thp1 to SAGA, which is crucial to target TREX-2 to the nuclear pore complex (NPC) necessary for export of mRNA. Upon environmental stress, involved in the bypass of the canonical mRNA export process for the immediate export of stress-related transcripts to maintain proteostasis (By similarity). Independent on its function in SAGA, promotes the assembly of the RNA-induced transcriptional silencing complex (RITS) and is required for pericentromeric heterochromatin silencing and the generation of siRNA (PubMed:26443059).</text>
</comment>
<comment type="subunit">
    <text evidence="1 5 6">Component of the 1.8 MDa SAGA (Spt-Ada-Gcn5 acetyltransferase) complex, which is composed of 19 subunits tra1, spt7, taf5, ngg1/ada3, sgf73, spt20, spt8, taf12, taf6, hfi1/ada1, ubp8, gcn5, ada2, spt3, sgf29, taf10, taf9, sgf11 and sus1 (PubMed:19056896). The SAGA complex is composed of 4 modules, namely the HAT (histone acetyltransferase) module (gcn5, ada2, ngg1/ada3 and sgf29), the DUB (deubiquitinating) module (ubp8, sgf11, sgf73 and sus1), the core or TAF (TBP-associated factor) module (taf5, taf6, taf9, taf10 and taf12), and the Tra1 or SPT (Suppressor of Ty) module (tra1, hfi1/ada1, spt3, spt7, spt8 and spt20). The Tra1/SPT module binds activators, the core module recruits TBP (TATA-binding protein), the HAT module contains the histone H3 acetyltransferase gcn5, and the DUB module comprises the histone H2B deubiquitinase ubp8 (By similarity). Interacts with the RITS subunits ago1 and chp1 (PubMed:26443059).</text>
</comment>
<comment type="subcellular location">
    <subcellularLocation>
        <location evidence="4">Nucleus</location>
    </subcellularLocation>
</comment>
<comment type="similarity">
    <text evidence="7">Belongs to the ataxin-7 family.</text>
</comment>
<feature type="chain" id="PRO_0000343136" description="SAGA complex subunit Sgf73">
    <location>
        <begin position="1"/>
        <end position="344"/>
    </location>
</feature>
<feature type="domain" description="SCA7" evidence="2">
    <location>
        <begin position="190"/>
        <end position="256"/>
    </location>
</feature>
<feature type="region of interest" description="Disordered" evidence="3">
    <location>
        <begin position="123"/>
        <end position="196"/>
    </location>
</feature>
<feature type="compositionally biased region" description="Polar residues" evidence="3">
    <location>
        <begin position="123"/>
        <end position="143"/>
    </location>
</feature>
<name>SGF73_SCHPO</name>
<gene>
    <name type="primary">sgf73</name>
    <name type="ORF">SPCC126.04c</name>
</gene>
<evidence type="ECO:0000250" key="1">
    <source>
        <dbReference type="UniProtKB" id="P53165"/>
    </source>
</evidence>
<evidence type="ECO:0000255" key="2">
    <source>
        <dbReference type="PROSITE-ProRule" id="PRU00838"/>
    </source>
</evidence>
<evidence type="ECO:0000256" key="3">
    <source>
        <dbReference type="SAM" id="MobiDB-lite"/>
    </source>
</evidence>
<evidence type="ECO:0000269" key="4">
    <source>
    </source>
</evidence>
<evidence type="ECO:0000269" key="5">
    <source>
    </source>
</evidence>
<evidence type="ECO:0000269" key="6">
    <source>
    </source>
</evidence>
<evidence type="ECO:0000305" key="7"/>
<keyword id="KW-0539">Nucleus</keyword>
<keyword id="KW-1185">Reference proteome</keyword>
<keyword id="KW-0804">Transcription</keyword>
<keyword id="KW-0805">Transcription regulation</keyword>
<accession>O94397</accession>
<sequence>MLTEQQTLELFPENWERNEQVLLKYPDGLPKDVLADQRVDNTESQVKDEITSNITNQTQILLPADSFPQYGSYPNNSELDYVVCTKCDRPFLSEYIEDHHSSCNGIKPPKPQFEPVANSQVLNKDVNNGNNAPIKNGVKSTAKGSAGNHEKNSVNGQKNPEMPPKRRKTEENKKPTKSALPKKEASKKKNPKVKGPVDVEKQCGVLLPNGQMCARSLTCKTHSMSSKRAVPGRSQPYDVLLAACQKKNQVKIQRQILETAKESEDNQHQAPVDSDEEVSFIMNVLQKSGNQPLEQKVFLPVKRRHSYFRTRELIAAAFRHGEQGMQVTGTILGRVIPFSARQPL</sequence>
<protein>
    <recommendedName>
        <fullName>SAGA complex subunit Sgf73</fullName>
    </recommendedName>
    <alternativeName>
        <fullName>SAGA-associated factor 73</fullName>
    </alternativeName>
</protein>
<reference key="1">
    <citation type="journal article" date="2002" name="Nature">
        <title>The genome sequence of Schizosaccharomyces pombe.</title>
        <authorList>
            <person name="Wood V."/>
            <person name="Gwilliam R."/>
            <person name="Rajandream M.A."/>
            <person name="Lyne M.H."/>
            <person name="Lyne R."/>
            <person name="Stewart A."/>
            <person name="Sgouros J.G."/>
            <person name="Peat N."/>
            <person name="Hayles J."/>
            <person name="Baker S.G."/>
            <person name="Basham D."/>
            <person name="Bowman S."/>
            <person name="Brooks K."/>
            <person name="Brown D."/>
            <person name="Brown S."/>
            <person name="Chillingworth T."/>
            <person name="Churcher C.M."/>
            <person name="Collins M."/>
            <person name="Connor R."/>
            <person name="Cronin A."/>
            <person name="Davis P."/>
            <person name="Feltwell T."/>
            <person name="Fraser A."/>
            <person name="Gentles S."/>
            <person name="Goble A."/>
            <person name="Hamlin N."/>
            <person name="Harris D.E."/>
            <person name="Hidalgo J."/>
            <person name="Hodgson G."/>
            <person name="Holroyd S."/>
            <person name="Hornsby T."/>
            <person name="Howarth S."/>
            <person name="Huckle E.J."/>
            <person name="Hunt S."/>
            <person name="Jagels K."/>
            <person name="James K.D."/>
            <person name="Jones L."/>
            <person name="Jones M."/>
            <person name="Leather S."/>
            <person name="McDonald S."/>
            <person name="McLean J."/>
            <person name="Mooney P."/>
            <person name="Moule S."/>
            <person name="Mungall K.L."/>
            <person name="Murphy L.D."/>
            <person name="Niblett D."/>
            <person name="Odell C."/>
            <person name="Oliver K."/>
            <person name="O'Neil S."/>
            <person name="Pearson D."/>
            <person name="Quail M.A."/>
            <person name="Rabbinowitsch E."/>
            <person name="Rutherford K.M."/>
            <person name="Rutter S."/>
            <person name="Saunders D."/>
            <person name="Seeger K."/>
            <person name="Sharp S."/>
            <person name="Skelton J."/>
            <person name="Simmonds M.N."/>
            <person name="Squares R."/>
            <person name="Squares S."/>
            <person name="Stevens K."/>
            <person name="Taylor K."/>
            <person name="Taylor R.G."/>
            <person name="Tivey A."/>
            <person name="Walsh S.V."/>
            <person name="Warren T."/>
            <person name="Whitehead S."/>
            <person name="Woodward J.R."/>
            <person name="Volckaert G."/>
            <person name="Aert R."/>
            <person name="Robben J."/>
            <person name="Grymonprez B."/>
            <person name="Weltjens I."/>
            <person name="Vanstreels E."/>
            <person name="Rieger M."/>
            <person name="Schaefer M."/>
            <person name="Mueller-Auer S."/>
            <person name="Gabel C."/>
            <person name="Fuchs M."/>
            <person name="Duesterhoeft A."/>
            <person name="Fritzc C."/>
            <person name="Holzer E."/>
            <person name="Moestl D."/>
            <person name="Hilbert H."/>
            <person name="Borzym K."/>
            <person name="Langer I."/>
            <person name="Beck A."/>
            <person name="Lehrach H."/>
            <person name="Reinhardt R."/>
            <person name="Pohl T.M."/>
            <person name="Eger P."/>
            <person name="Zimmermann W."/>
            <person name="Wedler H."/>
            <person name="Wambutt R."/>
            <person name="Purnelle B."/>
            <person name="Goffeau A."/>
            <person name="Cadieu E."/>
            <person name="Dreano S."/>
            <person name="Gloux S."/>
            <person name="Lelaure V."/>
            <person name="Mottier S."/>
            <person name="Galibert F."/>
            <person name="Aves S.J."/>
            <person name="Xiang Z."/>
            <person name="Hunt C."/>
            <person name="Moore K."/>
            <person name="Hurst S.M."/>
            <person name="Lucas M."/>
            <person name="Rochet M."/>
            <person name="Gaillardin C."/>
            <person name="Tallada V.A."/>
            <person name="Garzon A."/>
            <person name="Thode G."/>
            <person name="Daga R.R."/>
            <person name="Cruzado L."/>
            <person name="Jimenez J."/>
            <person name="Sanchez M."/>
            <person name="del Rey F."/>
            <person name="Benito J."/>
            <person name="Dominguez A."/>
            <person name="Revuelta J.L."/>
            <person name="Moreno S."/>
            <person name="Armstrong J."/>
            <person name="Forsburg S.L."/>
            <person name="Cerutti L."/>
            <person name="Lowe T."/>
            <person name="McCombie W.R."/>
            <person name="Paulsen I."/>
            <person name="Potashkin J."/>
            <person name="Shpakovski G.V."/>
            <person name="Ussery D."/>
            <person name="Barrell B.G."/>
            <person name="Nurse P."/>
        </authorList>
    </citation>
    <scope>NUCLEOTIDE SEQUENCE [LARGE SCALE GENOMIC DNA]</scope>
    <source>
        <strain>972 / ATCC 24843</strain>
    </source>
</reference>
<reference key="2">
    <citation type="journal article" date="2006" name="Nat. Biotechnol.">
        <title>ORFeome cloning and global analysis of protein localization in the fission yeast Schizosaccharomyces pombe.</title>
        <authorList>
            <person name="Matsuyama A."/>
            <person name="Arai R."/>
            <person name="Yashiroda Y."/>
            <person name="Shirai A."/>
            <person name="Kamata A."/>
            <person name="Sekido S."/>
            <person name="Kobayashi Y."/>
            <person name="Hashimoto A."/>
            <person name="Hamamoto M."/>
            <person name="Hiraoka Y."/>
            <person name="Horinouchi S."/>
            <person name="Yoshida M."/>
        </authorList>
    </citation>
    <scope>SUBCELLULAR LOCATION [LARGE SCALE ANALYSIS]</scope>
</reference>
<reference key="3">
    <citation type="journal article" date="2008" name="Genes Dev.">
        <title>The S. pombe SAGA complex controls the switch from proliferation to sexual differentiation through the opposing roles of its subunits Gcn5 and Spt8.</title>
        <authorList>
            <person name="Helmlinger D."/>
            <person name="Marguerat S."/>
            <person name="Villen J."/>
            <person name="Gygi S.P."/>
            <person name="Bahler J."/>
            <person name="Winston F."/>
        </authorList>
    </citation>
    <scope>IDENTIFICATION IN THE SAGA COMPLEX</scope>
    <scope>IDENTIFICATION BY MASS SPECTROMETRY</scope>
</reference>
<reference key="4">
    <citation type="journal article" date="2015" name="Sci. Rep.">
        <title>Sgf73, a subunit of SAGA complex, is required for the assembly of RITS complex in fission yeast.</title>
        <authorList>
            <person name="Deng X."/>
            <person name="Zhou H."/>
            <person name="Zhang G."/>
            <person name="Wang W."/>
            <person name="Mao L."/>
            <person name="Zhou X."/>
            <person name="Yu Y."/>
            <person name="Lu H."/>
        </authorList>
    </citation>
    <scope>FUNCTION</scope>
    <scope>INTERACTION WITH AGO1 AND CHP1</scope>
</reference>
<organism>
    <name type="scientific">Schizosaccharomyces pombe (strain 972 / ATCC 24843)</name>
    <name type="common">Fission yeast</name>
    <dbReference type="NCBI Taxonomy" id="284812"/>
    <lineage>
        <taxon>Eukaryota</taxon>
        <taxon>Fungi</taxon>
        <taxon>Dikarya</taxon>
        <taxon>Ascomycota</taxon>
        <taxon>Taphrinomycotina</taxon>
        <taxon>Schizosaccharomycetes</taxon>
        <taxon>Schizosaccharomycetales</taxon>
        <taxon>Schizosaccharomycetaceae</taxon>
        <taxon>Schizosaccharomyces</taxon>
    </lineage>
</organism>
<dbReference type="EMBL" id="CU329672">
    <property type="protein sequence ID" value="CAA22473.1"/>
    <property type="molecule type" value="Genomic_DNA"/>
</dbReference>
<dbReference type="PIR" id="T40908">
    <property type="entry name" value="T40908"/>
</dbReference>
<dbReference type="RefSeq" id="NP_588447.1">
    <property type="nucleotide sequence ID" value="NM_001023438.2"/>
</dbReference>
<dbReference type="SMR" id="O94397"/>
<dbReference type="BioGRID" id="275352">
    <property type="interactions" value="255"/>
</dbReference>
<dbReference type="FunCoup" id="O94397">
    <property type="interactions" value="48"/>
</dbReference>
<dbReference type="IntAct" id="O94397">
    <property type="interactions" value="2"/>
</dbReference>
<dbReference type="MINT" id="O94397"/>
<dbReference type="STRING" id="284812.O94397"/>
<dbReference type="iPTMnet" id="O94397"/>
<dbReference type="PaxDb" id="4896-SPCC126.04c.1"/>
<dbReference type="EnsemblFungi" id="SPCC126.04c.1">
    <property type="protein sequence ID" value="SPCC126.04c.1:pep"/>
    <property type="gene ID" value="SPCC126.04c"/>
</dbReference>
<dbReference type="GeneID" id="2538769"/>
<dbReference type="KEGG" id="spo:2538769"/>
<dbReference type="PomBase" id="SPCC126.04c">
    <property type="gene designation" value="sgf73"/>
</dbReference>
<dbReference type="VEuPathDB" id="FungiDB:SPCC126.04c"/>
<dbReference type="eggNOG" id="KOG4140">
    <property type="taxonomic scope" value="Eukaryota"/>
</dbReference>
<dbReference type="HOGENOM" id="CLU_044734_0_0_1"/>
<dbReference type="InParanoid" id="O94397"/>
<dbReference type="OMA" id="FRHGEQG"/>
<dbReference type="PhylomeDB" id="O94397"/>
<dbReference type="PRO" id="PR:O94397"/>
<dbReference type="Proteomes" id="UP000002485">
    <property type="component" value="Chromosome III"/>
</dbReference>
<dbReference type="GO" id="GO:0000785">
    <property type="term" value="C:chromatin"/>
    <property type="evidence" value="ECO:0000314"/>
    <property type="project" value="PomBase"/>
</dbReference>
<dbReference type="GO" id="GO:0071819">
    <property type="term" value="C:DUBm complex"/>
    <property type="evidence" value="ECO:0000303"/>
    <property type="project" value="PomBase"/>
</dbReference>
<dbReference type="GO" id="GO:0005634">
    <property type="term" value="C:nucleus"/>
    <property type="evidence" value="ECO:0007005"/>
    <property type="project" value="PomBase"/>
</dbReference>
<dbReference type="GO" id="GO:0000124">
    <property type="term" value="C:SAGA complex"/>
    <property type="evidence" value="ECO:0000314"/>
    <property type="project" value="PomBase"/>
</dbReference>
<dbReference type="GO" id="GO:0045893">
    <property type="term" value="P:positive regulation of DNA-templated transcription"/>
    <property type="evidence" value="ECO:0007669"/>
    <property type="project" value="GOC"/>
</dbReference>
<dbReference type="GO" id="GO:0006357">
    <property type="term" value="P:regulation of transcription by RNA polymerase II"/>
    <property type="evidence" value="ECO:0000269"/>
    <property type="project" value="PomBase"/>
</dbReference>
<dbReference type="GO" id="GO:0031048">
    <property type="term" value="P:regulatory ncRNA-mediated heterochromatin formation"/>
    <property type="evidence" value="ECO:0000318"/>
    <property type="project" value="GO_Central"/>
</dbReference>
<dbReference type="GO" id="GO:1904802">
    <property type="term" value="P:RITS complex assembly"/>
    <property type="evidence" value="ECO:0000315"/>
    <property type="project" value="PomBase"/>
</dbReference>
<dbReference type="GO" id="GO:0140727">
    <property type="term" value="P:siRNA-mediated pericentric heterochromatin formation"/>
    <property type="evidence" value="ECO:0000315"/>
    <property type="project" value="PomBase"/>
</dbReference>
<dbReference type="GO" id="GO:0045815">
    <property type="term" value="P:transcription initiation-coupled chromatin remodeling"/>
    <property type="evidence" value="ECO:0000305"/>
    <property type="project" value="PomBase"/>
</dbReference>
<dbReference type="Gene3D" id="6.10.140.1270">
    <property type="match status" value="1"/>
</dbReference>
<dbReference type="InterPro" id="IPR013243">
    <property type="entry name" value="SCA7_dom"/>
</dbReference>
<dbReference type="InterPro" id="IPR037804">
    <property type="entry name" value="SGF73"/>
</dbReference>
<dbReference type="PANTHER" id="PTHR47805">
    <property type="entry name" value="SAGA-ASSOCIATED FACTOR 73"/>
    <property type="match status" value="1"/>
</dbReference>
<dbReference type="PANTHER" id="PTHR47805:SF1">
    <property type="entry name" value="SAGA-ASSOCIATED FACTOR 73"/>
    <property type="match status" value="1"/>
</dbReference>
<dbReference type="Pfam" id="PF08313">
    <property type="entry name" value="SCA7"/>
    <property type="match status" value="1"/>
</dbReference>
<dbReference type="PROSITE" id="PS51505">
    <property type="entry name" value="SCA7"/>
    <property type="match status" value="1"/>
</dbReference>
<proteinExistence type="evidence at protein level"/>